<accession>A7GJ89</accession>
<protein>
    <recommendedName>
        <fullName evidence="1">Large ribosomal subunit protein bL33</fullName>
    </recommendedName>
    <alternativeName>
        <fullName evidence="2">50S ribosomal protein L33</fullName>
    </alternativeName>
</protein>
<gene>
    <name evidence="1" type="primary">rpmG</name>
    <name type="ordered locus">CLI_3678</name>
</gene>
<keyword id="KW-0687">Ribonucleoprotein</keyword>
<keyword id="KW-0689">Ribosomal protein</keyword>
<sequence>MRVKVTLACTECKRRNYNTMKNKKNDPDRLEMNKYCPHCHKHAAHKETK</sequence>
<dbReference type="EMBL" id="CP000728">
    <property type="protein sequence ID" value="ABS41983.1"/>
    <property type="molecule type" value="Genomic_DNA"/>
</dbReference>
<dbReference type="RefSeq" id="WP_003357626.1">
    <property type="nucleotide sequence ID" value="NC_009699.1"/>
</dbReference>
<dbReference type="SMR" id="A7GJ89"/>
<dbReference type="GeneID" id="5187732"/>
<dbReference type="KEGG" id="cbf:CLI_3678"/>
<dbReference type="HOGENOM" id="CLU_190949_0_2_9"/>
<dbReference type="Proteomes" id="UP000002410">
    <property type="component" value="Chromosome"/>
</dbReference>
<dbReference type="GO" id="GO:0005737">
    <property type="term" value="C:cytoplasm"/>
    <property type="evidence" value="ECO:0007669"/>
    <property type="project" value="UniProtKB-ARBA"/>
</dbReference>
<dbReference type="GO" id="GO:1990904">
    <property type="term" value="C:ribonucleoprotein complex"/>
    <property type="evidence" value="ECO:0007669"/>
    <property type="project" value="UniProtKB-KW"/>
</dbReference>
<dbReference type="GO" id="GO:0005840">
    <property type="term" value="C:ribosome"/>
    <property type="evidence" value="ECO:0007669"/>
    <property type="project" value="UniProtKB-KW"/>
</dbReference>
<dbReference type="GO" id="GO:0003735">
    <property type="term" value="F:structural constituent of ribosome"/>
    <property type="evidence" value="ECO:0007669"/>
    <property type="project" value="InterPro"/>
</dbReference>
<dbReference type="GO" id="GO:0006412">
    <property type="term" value="P:translation"/>
    <property type="evidence" value="ECO:0007669"/>
    <property type="project" value="UniProtKB-UniRule"/>
</dbReference>
<dbReference type="Gene3D" id="2.20.28.120">
    <property type="entry name" value="Ribosomal protein L33"/>
    <property type="match status" value="1"/>
</dbReference>
<dbReference type="HAMAP" id="MF_00294">
    <property type="entry name" value="Ribosomal_bL33"/>
    <property type="match status" value="1"/>
</dbReference>
<dbReference type="InterPro" id="IPR001705">
    <property type="entry name" value="Ribosomal_bL33"/>
</dbReference>
<dbReference type="InterPro" id="IPR018264">
    <property type="entry name" value="Ribosomal_bL33_CS"/>
</dbReference>
<dbReference type="InterPro" id="IPR038584">
    <property type="entry name" value="Ribosomal_bL33_sf"/>
</dbReference>
<dbReference type="InterPro" id="IPR011332">
    <property type="entry name" value="Ribosomal_zn-bd"/>
</dbReference>
<dbReference type="NCBIfam" id="NF001764">
    <property type="entry name" value="PRK00504.1"/>
    <property type="match status" value="1"/>
</dbReference>
<dbReference type="NCBIfam" id="NF001860">
    <property type="entry name" value="PRK00595.1"/>
    <property type="match status" value="1"/>
</dbReference>
<dbReference type="NCBIfam" id="TIGR01023">
    <property type="entry name" value="rpmG_bact"/>
    <property type="match status" value="1"/>
</dbReference>
<dbReference type="PANTHER" id="PTHR43168">
    <property type="entry name" value="50S RIBOSOMAL PROTEIN L33, CHLOROPLASTIC"/>
    <property type="match status" value="1"/>
</dbReference>
<dbReference type="PANTHER" id="PTHR43168:SF2">
    <property type="entry name" value="LARGE RIBOSOMAL SUBUNIT PROTEIN BL33C"/>
    <property type="match status" value="1"/>
</dbReference>
<dbReference type="Pfam" id="PF00471">
    <property type="entry name" value="Ribosomal_L33"/>
    <property type="match status" value="1"/>
</dbReference>
<dbReference type="SUPFAM" id="SSF57829">
    <property type="entry name" value="Zn-binding ribosomal proteins"/>
    <property type="match status" value="1"/>
</dbReference>
<dbReference type="PROSITE" id="PS00582">
    <property type="entry name" value="RIBOSOMAL_L33"/>
    <property type="match status" value="1"/>
</dbReference>
<comment type="similarity">
    <text evidence="1">Belongs to the bacterial ribosomal protein bL33 family.</text>
</comment>
<organism>
    <name type="scientific">Clostridium botulinum (strain Langeland / NCTC 10281 / Type F)</name>
    <dbReference type="NCBI Taxonomy" id="441772"/>
    <lineage>
        <taxon>Bacteria</taxon>
        <taxon>Bacillati</taxon>
        <taxon>Bacillota</taxon>
        <taxon>Clostridia</taxon>
        <taxon>Eubacteriales</taxon>
        <taxon>Clostridiaceae</taxon>
        <taxon>Clostridium</taxon>
    </lineage>
</organism>
<proteinExistence type="inferred from homology"/>
<evidence type="ECO:0000255" key="1">
    <source>
        <dbReference type="HAMAP-Rule" id="MF_00294"/>
    </source>
</evidence>
<evidence type="ECO:0000305" key="2"/>
<feature type="chain" id="PRO_0000356434" description="Large ribosomal subunit protein bL33">
    <location>
        <begin position="1"/>
        <end position="49"/>
    </location>
</feature>
<reference key="1">
    <citation type="submission" date="2007-06" db="EMBL/GenBank/DDBJ databases">
        <authorList>
            <person name="Brinkac L.M."/>
            <person name="Daugherty S."/>
            <person name="Dodson R.J."/>
            <person name="Madupu R."/>
            <person name="Brown J.L."/>
            <person name="Bruce D."/>
            <person name="Detter C."/>
            <person name="Munk C."/>
            <person name="Smith L.A."/>
            <person name="Smith T.J."/>
            <person name="White O."/>
            <person name="Brettin T.S."/>
        </authorList>
    </citation>
    <scope>NUCLEOTIDE SEQUENCE [LARGE SCALE GENOMIC DNA]</scope>
    <source>
        <strain>Langeland / NCTC 10281 / Type F</strain>
    </source>
</reference>
<name>RL33_CLOBL</name>